<evidence type="ECO:0000255" key="1">
    <source>
        <dbReference type="HAMAP-Rule" id="MF_00315"/>
    </source>
</evidence>
<keyword id="KW-0414">Isoprene biosynthesis</keyword>
<keyword id="KW-0460">Magnesium</keyword>
<keyword id="KW-0479">Metal-binding</keyword>
<keyword id="KW-0784">Thiamine biosynthesis</keyword>
<keyword id="KW-0786">Thiamine pyrophosphate</keyword>
<keyword id="KW-0808">Transferase</keyword>
<protein>
    <recommendedName>
        <fullName evidence="1">1-deoxy-D-xylulose-5-phosphate synthase</fullName>
        <ecNumber evidence="1">2.2.1.7</ecNumber>
    </recommendedName>
    <alternativeName>
        <fullName evidence="1">1-deoxyxylulose-5-phosphate synthase</fullName>
        <shortName evidence="1">DXP synthase</shortName>
        <shortName evidence="1">DXPS</shortName>
    </alternativeName>
</protein>
<gene>
    <name evidence="1" type="primary">dxs</name>
    <name type="ordered locus">SeHA_C0524</name>
</gene>
<comment type="function">
    <text evidence="1">Catalyzes the acyloin condensation reaction between C atoms 2 and 3 of pyruvate and glyceraldehyde 3-phosphate to yield 1-deoxy-D-xylulose-5-phosphate (DXP).</text>
</comment>
<comment type="catalytic activity">
    <reaction evidence="1">
        <text>D-glyceraldehyde 3-phosphate + pyruvate + H(+) = 1-deoxy-D-xylulose 5-phosphate + CO2</text>
        <dbReference type="Rhea" id="RHEA:12605"/>
        <dbReference type="ChEBI" id="CHEBI:15361"/>
        <dbReference type="ChEBI" id="CHEBI:15378"/>
        <dbReference type="ChEBI" id="CHEBI:16526"/>
        <dbReference type="ChEBI" id="CHEBI:57792"/>
        <dbReference type="ChEBI" id="CHEBI:59776"/>
        <dbReference type="EC" id="2.2.1.7"/>
    </reaction>
</comment>
<comment type="cofactor">
    <cofactor evidence="1">
        <name>Mg(2+)</name>
        <dbReference type="ChEBI" id="CHEBI:18420"/>
    </cofactor>
    <text evidence="1">Binds 1 Mg(2+) ion per subunit.</text>
</comment>
<comment type="cofactor">
    <cofactor evidence="1">
        <name>thiamine diphosphate</name>
        <dbReference type="ChEBI" id="CHEBI:58937"/>
    </cofactor>
    <text evidence="1">Binds 1 thiamine pyrophosphate per subunit.</text>
</comment>
<comment type="pathway">
    <text evidence="1">Metabolic intermediate biosynthesis; 1-deoxy-D-xylulose 5-phosphate biosynthesis; 1-deoxy-D-xylulose 5-phosphate from D-glyceraldehyde 3-phosphate and pyruvate: step 1/1.</text>
</comment>
<comment type="subunit">
    <text evidence="1">Homodimer.</text>
</comment>
<comment type="similarity">
    <text evidence="1">Belongs to the transketolase family. DXPS subfamily.</text>
</comment>
<name>DXS_SALHS</name>
<sequence length="620" mass="67434">MSFDIAKYPTLALVDSTQELRLLPKESLPKLCDELRRYLLDSVSRSSGHFASGLGTVELTVALHYVYNTPFDQLIWDVGHQAYPHKILTGRRDKIGTIRQKGGLHPFPWRGESEYDVLSVGHSSTSISAGIGIAVAAEKEGKDRRTVCVIGDGAITAGMAFEAMNHAGDIRPDMLVILNDNEMSISENVGALNNHLAQLLSGKLYSSLREGGKKVFSGVPPIKELLKRTEEHIKGMVVPGTLFEELGFNYIGPVDGHDVMGLISTLKNMRDLKGPQFLHIMTKKGRGYEPAEKDPITFHAVPKFDPSSGCLPKSSGGLPGYSKIFGDWLCETAAKDSKLMAITPAMREGSGMVEFSRKFPDRYFDVAIAEQHAVTFAAGLAIGGYKPVVAIYSTFLQRAYDQVIHDVAIQKLPVMFAIDRAGIVGADGQTHQGAFDLSYLRCIPDMVIMTPSDENECRQMLLTGYHYNDGPTAVRYPRGNAQGVALTPLEKLPIGKGLVKRHGEKLAILNFGTLMPEAAKVAEALNATLVDMRFVKPLDDTLILEMAAQHDALVTLEENAIMGGAGSGVNEVLMAHRKPVPVLNIGLPDFFIPQGTQEEARAELGLDAAGIEAKIKAWLA</sequence>
<dbReference type="EC" id="2.2.1.7" evidence="1"/>
<dbReference type="EMBL" id="CP001120">
    <property type="protein sequence ID" value="ACF70423.1"/>
    <property type="molecule type" value="Genomic_DNA"/>
</dbReference>
<dbReference type="RefSeq" id="WP_000006788.1">
    <property type="nucleotide sequence ID" value="NC_011083.1"/>
</dbReference>
<dbReference type="SMR" id="B4T8R3"/>
<dbReference type="KEGG" id="seh:SeHA_C0524"/>
<dbReference type="HOGENOM" id="CLU_009227_1_4_6"/>
<dbReference type="UniPathway" id="UPA00064">
    <property type="reaction ID" value="UER00091"/>
</dbReference>
<dbReference type="Proteomes" id="UP000001866">
    <property type="component" value="Chromosome"/>
</dbReference>
<dbReference type="GO" id="GO:0005829">
    <property type="term" value="C:cytosol"/>
    <property type="evidence" value="ECO:0007669"/>
    <property type="project" value="TreeGrafter"/>
</dbReference>
<dbReference type="GO" id="GO:0008661">
    <property type="term" value="F:1-deoxy-D-xylulose-5-phosphate synthase activity"/>
    <property type="evidence" value="ECO:0007669"/>
    <property type="project" value="UniProtKB-UniRule"/>
</dbReference>
<dbReference type="GO" id="GO:0000287">
    <property type="term" value="F:magnesium ion binding"/>
    <property type="evidence" value="ECO:0007669"/>
    <property type="project" value="UniProtKB-UniRule"/>
</dbReference>
<dbReference type="GO" id="GO:0030976">
    <property type="term" value="F:thiamine pyrophosphate binding"/>
    <property type="evidence" value="ECO:0007669"/>
    <property type="project" value="UniProtKB-UniRule"/>
</dbReference>
<dbReference type="GO" id="GO:0052865">
    <property type="term" value="P:1-deoxy-D-xylulose 5-phosphate biosynthetic process"/>
    <property type="evidence" value="ECO:0007669"/>
    <property type="project" value="UniProtKB-UniPathway"/>
</dbReference>
<dbReference type="GO" id="GO:0019288">
    <property type="term" value="P:isopentenyl diphosphate biosynthetic process, methylerythritol 4-phosphate pathway"/>
    <property type="evidence" value="ECO:0007669"/>
    <property type="project" value="TreeGrafter"/>
</dbReference>
<dbReference type="GO" id="GO:0016114">
    <property type="term" value="P:terpenoid biosynthetic process"/>
    <property type="evidence" value="ECO:0007669"/>
    <property type="project" value="UniProtKB-UniRule"/>
</dbReference>
<dbReference type="GO" id="GO:0009228">
    <property type="term" value="P:thiamine biosynthetic process"/>
    <property type="evidence" value="ECO:0007669"/>
    <property type="project" value="UniProtKB-UniRule"/>
</dbReference>
<dbReference type="CDD" id="cd02007">
    <property type="entry name" value="TPP_DXS"/>
    <property type="match status" value="1"/>
</dbReference>
<dbReference type="CDD" id="cd07033">
    <property type="entry name" value="TPP_PYR_DXS_TK_like"/>
    <property type="match status" value="1"/>
</dbReference>
<dbReference type="FunFam" id="3.40.50.920:FF:000002">
    <property type="entry name" value="1-deoxy-D-xylulose-5-phosphate synthase"/>
    <property type="match status" value="1"/>
</dbReference>
<dbReference type="FunFam" id="3.40.50.970:FF:000005">
    <property type="entry name" value="1-deoxy-D-xylulose-5-phosphate synthase"/>
    <property type="match status" value="1"/>
</dbReference>
<dbReference type="Gene3D" id="3.40.50.920">
    <property type="match status" value="1"/>
</dbReference>
<dbReference type="Gene3D" id="3.40.50.970">
    <property type="match status" value="2"/>
</dbReference>
<dbReference type="HAMAP" id="MF_00315">
    <property type="entry name" value="DXP_synth"/>
    <property type="match status" value="1"/>
</dbReference>
<dbReference type="InterPro" id="IPR005477">
    <property type="entry name" value="Dxylulose-5-P_synthase"/>
</dbReference>
<dbReference type="InterPro" id="IPR029061">
    <property type="entry name" value="THDP-binding"/>
</dbReference>
<dbReference type="InterPro" id="IPR009014">
    <property type="entry name" value="Transketo_C/PFOR_II"/>
</dbReference>
<dbReference type="InterPro" id="IPR005475">
    <property type="entry name" value="Transketolase-like_Pyr-bd"/>
</dbReference>
<dbReference type="InterPro" id="IPR020826">
    <property type="entry name" value="Transketolase_BS"/>
</dbReference>
<dbReference type="InterPro" id="IPR033248">
    <property type="entry name" value="Transketolase_C"/>
</dbReference>
<dbReference type="InterPro" id="IPR049557">
    <property type="entry name" value="Transketolase_CS"/>
</dbReference>
<dbReference type="NCBIfam" id="TIGR00204">
    <property type="entry name" value="dxs"/>
    <property type="match status" value="1"/>
</dbReference>
<dbReference type="NCBIfam" id="NF003933">
    <property type="entry name" value="PRK05444.2-2"/>
    <property type="match status" value="1"/>
</dbReference>
<dbReference type="PANTHER" id="PTHR43322">
    <property type="entry name" value="1-D-DEOXYXYLULOSE 5-PHOSPHATE SYNTHASE-RELATED"/>
    <property type="match status" value="1"/>
</dbReference>
<dbReference type="PANTHER" id="PTHR43322:SF5">
    <property type="entry name" value="1-DEOXY-D-XYLULOSE-5-PHOSPHATE SYNTHASE, CHLOROPLASTIC"/>
    <property type="match status" value="1"/>
</dbReference>
<dbReference type="Pfam" id="PF13292">
    <property type="entry name" value="DXP_synthase_N"/>
    <property type="match status" value="1"/>
</dbReference>
<dbReference type="Pfam" id="PF02779">
    <property type="entry name" value="Transket_pyr"/>
    <property type="match status" value="1"/>
</dbReference>
<dbReference type="Pfam" id="PF02780">
    <property type="entry name" value="Transketolase_C"/>
    <property type="match status" value="1"/>
</dbReference>
<dbReference type="SMART" id="SM00861">
    <property type="entry name" value="Transket_pyr"/>
    <property type="match status" value="1"/>
</dbReference>
<dbReference type="SUPFAM" id="SSF52518">
    <property type="entry name" value="Thiamin diphosphate-binding fold (THDP-binding)"/>
    <property type="match status" value="2"/>
</dbReference>
<dbReference type="SUPFAM" id="SSF52922">
    <property type="entry name" value="TK C-terminal domain-like"/>
    <property type="match status" value="1"/>
</dbReference>
<dbReference type="PROSITE" id="PS00801">
    <property type="entry name" value="TRANSKETOLASE_1"/>
    <property type="match status" value="1"/>
</dbReference>
<dbReference type="PROSITE" id="PS00802">
    <property type="entry name" value="TRANSKETOLASE_2"/>
    <property type="match status" value="1"/>
</dbReference>
<feature type="chain" id="PRO_1000115768" description="1-deoxy-D-xylulose-5-phosphate synthase">
    <location>
        <begin position="1"/>
        <end position="620"/>
    </location>
</feature>
<feature type="binding site" evidence="1">
    <location>
        <position position="80"/>
    </location>
    <ligand>
        <name>thiamine diphosphate</name>
        <dbReference type="ChEBI" id="CHEBI:58937"/>
    </ligand>
</feature>
<feature type="binding site" evidence="1">
    <location>
        <begin position="121"/>
        <end position="123"/>
    </location>
    <ligand>
        <name>thiamine diphosphate</name>
        <dbReference type="ChEBI" id="CHEBI:58937"/>
    </ligand>
</feature>
<feature type="binding site" evidence="1">
    <location>
        <position position="152"/>
    </location>
    <ligand>
        <name>Mg(2+)</name>
        <dbReference type="ChEBI" id="CHEBI:18420"/>
    </ligand>
</feature>
<feature type="binding site" evidence="1">
    <location>
        <begin position="153"/>
        <end position="154"/>
    </location>
    <ligand>
        <name>thiamine diphosphate</name>
        <dbReference type="ChEBI" id="CHEBI:58937"/>
    </ligand>
</feature>
<feature type="binding site" evidence="1">
    <location>
        <position position="181"/>
    </location>
    <ligand>
        <name>Mg(2+)</name>
        <dbReference type="ChEBI" id="CHEBI:18420"/>
    </ligand>
</feature>
<feature type="binding site" evidence="1">
    <location>
        <position position="181"/>
    </location>
    <ligand>
        <name>thiamine diphosphate</name>
        <dbReference type="ChEBI" id="CHEBI:58937"/>
    </ligand>
</feature>
<feature type="binding site" evidence="1">
    <location>
        <position position="288"/>
    </location>
    <ligand>
        <name>thiamine diphosphate</name>
        <dbReference type="ChEBI" id="CHEBI:58937"/>
    </ligand>
</feature>
<feature type="binding site" evidence="1">
    <location>
        <position position="370"/>
    </location>
    <ligand>
        <name>thiamine diphosphate</name>
        <dbReference type="ChEBI" id="CHEBI:58937"/>
    </ligand>
</feature>
<proteinExistence type="inferred from homology"/>
<reference key="1">
    <citation type="journal article" date="2011" name="J. Bacteriol.">
        <title>Comparative genomics of 28 Salmonella enterica isolates: evidence for CRISPR-mediated adaptive sublineage evolution.</title>
        <authorList>
            <person name="Fricke W.F."/>
            <person name="Mammel M.K."/>
            <person name="McDermott P.F."/>
            <person name="Tartera C."/>
            <person name="White D.G."/>
            <person name="Leclerc J.E."/>
            <person name="Ravel J."/>
            <person name="Cebula T.A."/>
        </authorList>
    </citation>
    <scope>NUCLEOTIDE SEQUENCE [LARGE SCALE GENOMIC DNA]</scope>
    <source>
        <strain>SL476</strain>
    </source>
</reference>
<organism>
    <name type="scientific">Salmonella heidelberg (strain SL476)</name>
    <dbReference type="NCBI Taxonomy" id="454169"/>
    <lineage>
        <taxon>Bacteria</taxon>
        <taxon>Pseudomonadati</taxon>
        <taxon>Pseudomonadota</taxon>
        <taxon>Gammaproteobacteria</taxon>
        <taxon>Enterobacterales</taxon>
        <taxon>Enterobacteriaceae</taxon>
        <taxon>Salmonella</taxon>
    </lineage>
</organism>
<accession>B4T8R3</accession>